<dbReference type="EC" id="2.4.-.-"/>
<dbReference type="EMBL" id="L77117">
    <property type="protein sequence ID" value="AAB99061.1"/>
    <property type="molecule type" value="Genomic_DNA"/>
</dbReference>
<dbReference type="PIR" id="H64431">
    <property type="entry name" value="H64431"/>
</dbReference>
<dbReference type="FunCoup" id="Q58457">
    <property type="interactions" value="4"/>
</dbReference>
<dbReference type="STRING" id="243232.MJ_1057"/>
<dbReference type="CAZy" id="GT2">
    <property type="family name" value="Glycosyltransferase Family 2"/>
</dbReference>
<dbReference type="PaxDb" id="243232-MJ_1057"/>
<dbReference type="EnsemblBacteria" id="AAB99061">
    <property type="protein sequence ID" value="AAB99061"/>
    <property type="gene ID" value="MJ_1057"/>
</dbReference>
<dbReference type="KEGG" id="mja:MJ_1057"/>
<dbReference type="eggNOG" id="arCOG01381">
    <property type="taxonomic scope" value="Archaea"/>
</dbReference>
<dbReference type="HOGENOM" id="CLU_025996_0_4_2"/>
<dbReference type="InParanoid" id="Q58457"/>
<dbReference type="PhylomeDB" id="Q58457"/>
<dbReference type="Proteomes" id="UP000000805">
    <property type="component" value="Chromosome"/>
</dbReference>
<dbReference type="GO" id="GO:0016758">
    <property type="term" value="F:hexosyltransferase activity"/>
    <property type="evidence" value="ECO:0007669"/>
    <property type="project" value="UniProtKB-ARBA"/>
</dbReference>
<dbReference type="GO" id="GO:0009058">
    <property type="term" value="P:biosynthetic process"/>
    <property type="evidence" value="ECO:0007669"/>
    <property type="project" value="UniProtKB-ARBA"/>
</dbReference>
<dbReference type="Gene3D" id="3.90.550.10">
    <property type="entry name" value="Spore Coat Polysaccharide Biosynthesis Protein SpsA, Chain A"/>
    <property type="match status" value="1"/>
</dbReference>
<dbReference type="InterPro" id="IPR001173">
    <property type="entry name" value="Glyco_trans_2-like"/>
</dbReference>
<dbReference type="InterPro" id="IPR029044">
    <property type="entry name" value="Nucleotide-diphossugar_trans"/>
</dbReference>
<dbReference type="PANTHER" id="PTHR22916">
    <property type="entry name" value="GLYCOSYLTRANSFERASE"/>
    <property type="match status" value="1"/>
</dbReference>
<dbReference type="PANTHER" id="PTHR22916:SF3">
    <property type="entry name" value="UDP-GLCNAC:BETAGAL BETA-1,3-N-ACETYLGLUCOSAMINYLTRANSFERASE-LIKE PROTEIN 1"/>
    <property type="match status" value="1"/>
</dbReference>
<dbReference type="Pfam" id="PF00535">
    <property type="entry name" value="Glycos_transf_2"/>
    <property type="match status" value="1"/>
</dbReference>
<dbReference type="SUPFAM" id="SSF53448">
    <property type="entry name" value="Nucleotide-diphospho-sugar transferases"/>
    <property type="match status" value="1"/>
</dbReference>
<comment type="similarity">
    <text evidence="1">Belongs to the glycosyltransferase 2 family.</text>
</comment>
<feature type="chain" id="PRO_0000059252" description="Uncharacterized glycosyltransferase MJ1057">
    <location>
        <begin position="1"/>
        <end position="290"/>
    </location>
</feature>
<gene>
    <name type="ordered locus">MJ1057</name>
</gene>
<evidence type="ECO:0000305" key="1"/>
<protein>
    <recommendedName>
        <fullName>Uncharacterized glycosyltransferase MJ1057</fullName>
        <ecNumber>2.4.-.-</ecNumber>
    </recommendedName>
</protein>
<accession>Q58457</accession>
<proteinExistence type="inferred from homology"/>
<name>Y1057_METJA</name>
<organism>
    <name type="scientific">Methanocaldococcus jannaschii (strain ATCC 43067 / DSM 2661 / JAL-1 / JCM 10045 / NBRC 100440)</name>
    <name type="common">Methanococcus jannaschii</name>
    <dbReference type="NCBI Taxonomy" id="243232"/>
    <lineage>
        <taxon>Archaea</taxon>
        <taxon>Methanobacteriati</taxon>
        <taxon>Methanobacteriota</taxon>
        <taxon>Methanomada group</taxon>
        <taxon>Methanococci</taxon>
        <taxon>Methanococcales</taxon>
        <taxon>Methanocaldococcaceae</taxon>
        <taxon>Methanocaldococcus</taxon>
    </lineage>
</organism>
<keyword id="KW-0328">Glycosyltransferase</keyword>
<keyword id="KW-1185">Reference proteome</keyword>
<keyword id="KW-0808">Transferase</keyword>
<reference key="1">
    <citation type="journal article" date="1996" name="Science">
        <title>Complete genome sequence of the methanogenic archaeon, Methanococcus jannaschii.</title>
        <authorList>
            <person name="Bult C.J."/>
            <person name="White O."/>
            <person name="Olsen G.J."/>
            <person name="Zhou L."/>
            <person name="Fleischmann R.D."/>
            <person name="Sutton G.G."/>
            <person name="Blake J.A."/>
            <person name="FitzGerald L.M."/>
            <person name="Clayton R.A."/>
            <person name="Gocayne J.D."/>
            <person name="Kerlavage A.R."/>
            <person name="Dougherty B.A."/>
            <person name="Tomb J.-F."/>
            <person name="Adams M.D."/>
            <person name="Reich C.I."/>
            <person name="Overbeek R."/>
            <person name="Kirkness E.F."/>
            <person name="Weinstock K.G."/>
            <person name="Merrick J.M."/>
            <person name="Glodek A."/>
            <person name="Scott J.L."/>
            <person name="Geoghagen N.S.M."/>
            <person name="Weidman J.F."/>
            <person name="Fuhrmann J.L."/>
            <person name="Nguyen D."/>
            <person name="Utterback T.R."/>
            <person name="Kelley J.M."/>
            <person name="Peterson J.D."/>
            <person name="Sadow P.W."/>
            <person name="Hanna M.C."/>
            <person name="Cotton M.D."/>
            <person name="Roberts K.M."/>
            <person name="Hurst M.A."/>
            <person name="Kaine B.P."/>
            <person name="Borodovsky M."/>
            <person name="Klenk H.-P."/>
            <person name="Fraser C.M."/>
            <person name="Smith H.O."/>
            <person name="Woese C.R."/>
            <person name="Venter J.C."/>
        </authorList>
    </citation>
    <scope>NUCLEOTIDE SEQUENCE [LARGE SCALE GENOMIC DNA]</scope>
    <source>
        <strain>ATCC 43067 / DSM 2661 / JAL-1 / JCM 10045 / NBRC 100440</strain>
    </source>
</reference>
<sequence length="290" mass="35103">MVGEMDKPLVSVVMATYNEPEKYLKESIESIXNQTXKDFXFIIVLDNPNNKKAEEIIKEYQQKDKRIIFIKNERNLGRGASRNKAVNIARGKYIAILDADDIALPKRLEKQFKYMENNRDIDLLFSWVYFIDENGNILKEFKPEKYKFKEIKKYFFKEHLTVHPSMMVKSKILKKLKYDEKLIRSQDYDFWIRCIANDYKFDIIEEFLLKYRIPNRDNYLSRIKKQKLYSYYTLKTHWKNKKHFCNNVYFWKVFFYSLVVYLFIVLTPTFILKILIDIKDKKTEISTKGH</sequence>